<protein>
    <recommendedName>
        <fullName evidence="7">C2 domain-containing protein aex-1</fullName>
    </recommendedName>
</protein>
<reference evidence="8" key="1">
    <citation type="journal article" date="2002" name="Neuron">
        <title>Regulation of retrograde signaling at neuromuscular junctions by the novel C2 domain protein AEX-1.</title>
        <authorList>
            <person name="Doi M."/>
            <person name="Iwasaki K."/>
        </authorList>
    </citation>
    <scope>NUCLEOTIDE SEQUENCE [MRNA]</scope>
    <scope>FUNCTION</scope>
    <scope>TISSUE SPECIFICITY</scope>
    <scope>DISRUPTION PHENOTYPE</scope>
</reference>
<reference evidence="9" key="2">
    <citation type="journal article" date="1998" name="Science">
        <title>Genome sequence of the nematode C. elegans: a platform for investigating biology.</title>
        <authorList>
            <consortium name="The C. elegans sequencing consortium"/>
        </authorList>
    </citation>
    <scope>NUCLEOTIDE SEQUENCE [LARGE SCALE GENOMIC DNA]</scope>
    <source>
        <strain evidence="9">Bristol N2</strain>
    </source>
</reference>
<reference evidence="7" key="3">
    <citation type="journal article" date="1990" name="Genetics">
        <title>Genetic analysis of defecation in Caenorhabditis elegans.</title>
        <authorList>
            <person name="Thomas J.H."/>
        </authorList>
    </citation>
    <scope>FUNCTION</scope>
    <scope>DISRUPTION PHENOTYPE</scope>
</reference>
<reference evidence="7" key="4">
    <citation type="journal article" date="2009" name="Biochem. Biophys. Res. Commun.">
        <title>The non-neuronal syntaxin SYN-1 regulates defecation behavior and neural activity in C. elegans through interaction with the Munc13-like protein AEX-1.</title>
        <authorList>
            <person name="Yamashita M."/>
            <person name="Iwasaki K."/>
            <person name="Doi M."/>
        </authorList>
    </citation>
    <scope>FUNCTION</scope>
    <scope>DISRUPTION PHENOTYPE</scope>
</reference>
<reference evidence="7" key="5">
    <citation type="journal article" date="2015" name="PLoS ONE">
        <title>Aberrant fat metabolism in Caenorhabditis elegans mutants with defects in the defecation motor program.</title>
        <authorList>
            <person name="Sheng M."/>
            <person name="Hosseinzadeh A."/>
            <person name="Muralidharan S.V."/>
            <person name="Gaur R."/>
            <person name="Selstam E."/>
            <person name="Tuck S."/>
        </authorList>
    </citation>
    <scope>FUNCTION</scope>
    <scope>DISRUPTION PHENOTYPE</scope>
</reference>
<sequence length="1009" mass="117153">MREEALESICAALSISFTEDPDHLESIIDRFSEIFKVKDHLNQLRKKCEKFQTFTLEIRPVGSSNCTENVYAYIIESETCRQLELKPTGTTKLEIGSDKNVSLKFGLSQKKDSTTSKKGLSRSASLLKKLKFSDKKNLDELKISIFPLDIAVRKNINLGSGKSTLLEMKLIRNDHRNMIQCLEFDDFLEMTRSFHEWQAQISESELYDGSLGDPTFSMFYSIAFFFEIPSFVLKLTEMTCFLVWDDEMKKLDERALADVSLKMTACESEVDLQHPLLSPALSYLNDCTCNTIRCILVPFSTEPFFPPVSPSRLKSINVALKLIADICVLDVWDEFENLANPSNFLSSELKKLLESSAERYGESLKKQEFNELCRTILNLWMSLSNESQPYYIFFHQFDINYIGAAMLKLDKYLAESIQISLKCQLDLLNLRIPTELENFTKTTMRLFVTLRNLLNMVEAFHLPECQLFHFEEWFTDISVFWTYSWREVTLQMVERTITLDEDGDSVKYGARRPLPAGLYSFLCIQKGISDDLARLEFTFPHHLVVCAASVVNIMCQNINAYARKLFSEAMRNHEEKASRLVRATNGIEQAMCFVEEGYRRFAQFQRLEEYVDVDDLSAVRSTSIRLLKSTRDTCEIQVSTLLSHFVNLKTDIVLKIAKNLCADGKESNSGLKSYMRELASSERIESILECCYGLVDDVRCLLLPNCFKLSTQHFATSLEQQIRKNIRQKQPAEYYSNIYVGFLNILIFKRLKQMYLKFQIALKYIYEFLEIEDRKDIELLSNLHLNSFSTKDLILSYYDSLCEKIDRTRFGNAPHVDVHISYVKMVDEDTISIQIKLIKMSPIEWIDVISDRVDYFVRLELFPKILFPSNKFESPTTNPMPQSTRPQWKQLFEIRVPLECFFLRGACLAISVFDHERFIDRLVGRGFISLHSVPQASEEKPTQRLQVPLLPNDFSDQNNVFYQLLKTRACRDSIAKEFIETRTRRHQRIRALQHYIRINRNRVGHMLLG</sequence>
<accession>G5EEU3</accession>
<feature type="chain" id="PRO_0000439619" description="C2 domain-containing protein aex-1" evidence="7">
    <location>
        <begin position="1"/>
        <end position="1009"/>
    </location>
</feature>
<feature type="domain" description="C2" evidence="1">
    <location>
        <begin position="812"/>
        <end position="945"/>
    </location>
</feature>
<evidence type="ECO:0000255" key="1">
    <source>
        <dbReference type="PROSITE-ProRule" id="PRU00041"/>
    </source>
</evidence>
<evidence type="ECO:0000269" key="2">
    <source>
    </source>
</evidence>
<evidence type="ECO:0000269" key="3">
    <source>
    </source>
</evidence>
<evidence type="ECO:0000269" key="4">
    <source>
    </source>
</evidence>
<evidence type="ECO:0000269" key="5">
    <source>
    </source>
</evidence>
<evidence type="ECO:0000303" key="6">
    <source>
    </source>
</evidence>
<evidence type="ECO:0000305" key="7"/>
<evidence type="ECO:0000312" key="8">
    <source>
        <dbReference type="EMBL" id="AAL82897.1"/>
    </source>
</evidence>
<evidence type="ECO:0000312" key="9">
    <source>
        <dbReference type="Proteomes" id="UP000001940"/>
    </source>
</evidence>
<evidence type="ECO:0000312" key="10">
    <source>
        <dbReference type="WormBase" id="D2030.10a"/>
    </source>
</evidence>
<proteinExistence type="evidence at transcript level"/>
<gene>
    <name evidence="6 10" type="primary">aex-1</name>
    <name evidence="10" type="ORF">D2030.10</name>
</gene>
<keyword id="KW-0268">Exocytosis</keyword>
<keyword id="KW-1185">Reference proteome</keyword>
<name>AEX1_CAEEL</name>
<organism evidence="8">
    <name type="scientific">Caenorhabditis elegans</name>
    <dbReference type="NCBI Taxonomy" id="6239"/>
    <lineage>
        <taxon>Eukaryota</taxon>
        <taxon>Metazoa</taxon>
        <taxon>Ecdysozoa</taxon>
        <taxon>Nematoda</taxon>
        <taxon>Chromadorea</taxon>
        <taxon>Rhabditida</taxon>
        <taxon>Rhabditina</taxon>
        <taxon>Rhabditomorpha</taxon>
        <taxon>Rhabditoidea</taxon>
        <taxon>Rhabditidae</taxon>
        <taxon>Peloderinae</taxon>
        <taxon>Caenorhabditis</taxon>
    </lineage>
</organism>
<comment type="function">
    <text evidence="2 3 4 5">Involved in retrograde signaling from post-synaptic cells to pre-synaptic neurons, probably by regulating vesicle exocytosis in post-synaptic cells (PubMed:11804572, PubMed:19028454, PubMed:2323555). Acts in muscles, to regulate the localization of synaptic vesicle fusion protein unc-13 likely during vesicle exocytosis and thus regulate retrograde signaling at the neuromuscular junction (NMJ) (PubMed:11804572). Regulates anterior body muscle contractions (aBOC) and the expulsion steps during the defecation motor program (DMP) (PubMed:11804572, PubMed:19028454, PubMed:2323555). Probably by regulating DMP, plays a homeostatic role in the uptake of triglycerides (PubMed:25849533). Regulates locomotion (PubMed:11804572).</text>
</comment>
<comment type="tissue specificity">
    <text evidence="2">Expressed in intestine, body wall muscles and some amphid neurons.</text>
</comment>
<comment type="disruption phenotype">
    <text evidence="2 3 4 5">Severely constipated due to absent or weak anterior body muscle (aBOC) and intestinal contractions during the defecation cycle (PubMed:11804572, PubMed:2323555). Reduced uptake and accumulation of triglycerides (PubMed:25849533). Locomotion defects characterized by mild body thrashing (PubMed:11804572). Partially resistant to paralysis induced by acetylcholine esterase inhibitor aldicarb (PubMed:19028454, PubMed:2323555). Reduced enrichment of unc-13 at presynaptic active sites of neuromuscular junctions (PubMed:11804572).</text>
</comment>
<comment type="similarity">
    <text evidence="7">Belongs to the unc-13 family.</text>
</comment>
<dbReference type="EMBL" id="AF324832">
    <property type="protein sequence ID" value="AAL82897.1"/>
    <property type="molecule type" value="mRNA"/>
</dbReference>
<dbReference type="EMBL" id="BX284601">
    <property type="protein sequence ID" value="CAA98122.2"/>
    <property type="molecule type" value="Genomic_DNA"/>
</dbReference>
<dbReference type="PIR" id="T20361">
    <property type="entry name" value="T20361"/>
</dbReference>
<dbReference type="RefSeq" id="NP_740891.1">
    <property type="nucleotide sequence ID" value="NM_170901.4"/>
</dbReference>
<dbReference type="FunCoup" id="G5EEU3">
    <property type="interactions" value="458"/>
</dbReference>
<dbReference type="STRING" id="6239.D2030.10a.2"/>
<dbReference type="PaxDb" id="6239-D2030.10a"/>
<dbReference type="EnsemblMetazoa" id="D2030.10a.1">
    <property type="protein sequence ID" value="D2030.10a.1"/>
    <property type="gene ID" value="WBGene00000084"/>
</dbReference>
<dbReference type="GeneID" id="172519"/>
<dbReference type="KEGG" id="cel:CELE_D2030.10"/>
<dbReference type="AGR" id="WB:WBGene00000084"/>
<dbReference type="CTD" id="172519"/>
<dbReference type="WormBase" id="D2030.10a">
    <property type="protein sequence ID" value="CE30740"/>
    <property type="gene ID" value="WBGene00000084"/>
    <property type="gene designation" value="aex-1"/>
</dbReference>
<dbReference type="eggNOG" id="ENOG502T2S0">
    <property type="taxonomic scope" value="Eukaryota"/>
</dbReference>
<dbReference type="GeneTree" id="ENSGT00730000110939"/>
<dbReference type="HOGENOM" id="CLU_297037_0_0_1"/>
<dbReference type="InParanoid" id="G5EEU3"/>
<dbReference type="OMA" id="VWDEFEN"/>
<dbReference type="OrthoDB" id="7976202at2759"/>
<dbReference type="PhylomeDB" id="G5EEU3"/>
<dbReference type="Reactome" id="R-CEL-6798695">
    <property type="pathway name" value="Neutrophil degranulation"/>
</dbReference>
<dbReference type="PRO" id="PR:G5EEU3"/>
<dbReference type="Proteomes" id="UP000001940">
    <property type="component" value="Chromosome I"/>
</dbReference>
<dbReference type="Bgee" id="WBGene00000084">
    <property type="expression patterns" value="Expressed in adult organism and 2 other cell types or tissues"/>
</dbReference>
<dbReference type="ExpressionAtlas" id="G5EEU3">
    <property type="expression patterns" value="baseline and differential"/>
</dbReference>
<dbReference type="GO" id="GO:0070382">
    <property type="term" value="C:exocytic vesicle"/>
    <property type="evidence" value="ECO:0000250"/>
    <property type="project" value="WormBase"/>
</dbReference>
<dbReference type="GO" id="GO:0099503">
    <property type="term" value="C:secretory vesicle"/>
    <property type="evidence" value="ECO:0000318"/>
    <property type="project" value="GO_Central"/>
</dbReference>
<dbReference type="GO" id="GO:0030421">
    <property type="term" value="P:defecation"/>
    <property type="evidence" value="ECO:0000315"/>
    <property type="project" value="WormBase"/>
</dbReference>
<dbReference type="GO" id="GO:0018991">
    <property type="term" value="P:egg-laying behavior"/>
    <property type="evidence" value="ECO:0000315"/>
    <property type="project" value="WormBase"/>
</dbReference>
<dbReference type="GO" id="GO:0006887">
    <property type="term" value="P:exocytosis"/>
    <property type="evidence" value="ECO:0007669"/>
    <property type="project" value="UniProtKB-KW"/>
</dbReference>
<dbReference type="GO" id="GO:0010877">
    <property type="term" value="P:lipid transport involved in lipid storage"/>
    <property type="evidence" value="ECO:0000315"/>
    <property type="project" value="UniProtKB"/>
</dbReference>
<dbReference type="GO" id="GO:0040011">
    <property type="term" value="P:locomotion"/>
    <property type="evidence" value="ECO:0000315"/>
    <property type="project" value="WormBase"/>
</dbReference>
<dbReference type="GO" id="GO:0060179">
    <property type="term" value="P:male mating behavior"/>
    <property type="evidence" value="ECO:0000315"/>
    <property type="project" value="WormBase"/>
</dbReference>
<dbReference type="GO" id="GO:0014057">
    <property type="term" value="P:positive regulation of acetylcholine secretion, neurotransmission"/>
    <property type="evidence" value="ECO:0000315"/>
    <property type="project" value="WormBase"/>
</dbReference>
<dbReference type="GO" id="GO:2000294">
    <property type="term" value="P:positive regulation of defecation"/>
    <property type="evidence" value="ECO:0000315"/>
    <property type="project" value="UniProtKB"/>
</dbReference>
<dbReference type="GO" id="GO:1904731">
    <property type="term" value="P:positive regulation of intestinal lipid absorption"/>
    <property type="evidence" value="ECO:0000315"/>
    <property type="project" value="UniProtKB"/>
</dbReference>
<dbReference type="GO" id="GO:1905885">
    <property type="term" value="P:positive regulation of triglyceride transport"/>
    <property type="evidence" value="ECO:0000315"/>
    <property type="project" value="UniProtKB"/>
</dbReference>
<dbReference type="GO" id="GO:0035418">
    <property type="term" value="P:protein localization to synapse"/>
    <property type="evidence" value="ECO:0000315"/>
    <property type="project" value="WormBase"/>
</dbReference>
<dbReference type="GO" id="GO:0006937">
    <property type="term" value="P:regulation of muscle contraction"/>
    <property type="evidence" value="ECO:0000315"/>
    <property type="project" value="UniProtKB"/>
</dbReference>
<dbReference type="Gene3D" id="2.60.40.150">
    <property type="entry name" value="C2 domain"/>
    <property type="match status" value="1"/>
</dbReference>
<dbReference type="InterPro" id="IPR000008">
    <property type="entry name" value="C2_dom"/>
</dbReference>
<dbReference type="InterPro" id="IPR035892">
    <property type="entry name" value="C2_domain_sf"/>
</dbReference>
<dbReference type="InterPro" id="IPR052095">
    <property type="entry name" value="UNC-13_domain"/>
</dbReference>
<dbReference type="PANTHER" id="PTHR45999">
    <property type="entry name" value="UNC-13-4A, ISOFORM B"/>
    <property type="match status" value="1"/>
</dbReference>
<dbReference type="PANTHER" id="PTHR45999:SF4">
    <property type="entry name" value="UNC-13-4A, ISOFORM B"/>
    <property type="match status" value="1"/>
</dbReference>
<dbReference type="Pfam" id="PF00168">
    <property type="entry name" value="C2"/>
    <property type="match status" value="1"/>
</dbReference>
<dbReference type="SUPFAM" id="SSF49562">
    <property type="entry name" value="C2 domain (Calcium/lipid-binding domain, CaLB)"/>
    <property type="match status" value="1"/>
</dbReference>
<dbReference type="PROSITE" id="PS50004">
    <property type="entry name" value="C2"/>
    <property type="match status" value="1"/>
</dbReference>